<comment type="catalytic activity">
    <reaction evidence="1">
        <text>tRNA(Arg) + L-arginine + ATP = L-arginyl-tRNA(Arg) + AMP + diphosphate</text>
        <dbReference type="Rhea" id="RHEA:20301"/>
        <dbReference type="Rhea" id="RHEA-COMP:9658"/>
        <dbReference type="Rhea" id="RHEA-COMP:9673"/>
        <dbReference type="ChEBI" id="CHEBI:30616"/>
        <dbReference type="ChEBI" id="CHEBI:32682"/>
        <dbReference type="ChEBI" id="CHEBI:33019"/>
        <dbReference type="ChEBI" id="CHEBI:78442"/>
        <dbReference type="ChEBI" id="CHEBI:78513"/>
        <dbReference type="ChEBI" id="CHEBI:456215"/>
        <dbReference type="EC" id="6.1.1.19"/>
    </reaction>
</comment>
<comment type="subunit">
    <text evidence="1">Monomer.</text>
</comment>
<comment type="subcellular location">
    <subcellularLocation>
        <location evidence="1">Cytoplasm</location>
    </subcellularLocation>
</comment>
<comment type="similarity">
    <text evidence="1">Belongs to the class-I aminoacyl-tRNA synthetase family.</text>
</comment>
<sequence length="554" mass="59517">MTPEELSLAISACLKDAVAAGEIALAESAVPEDVRVERPKNRDHGDWATNIALQLAKQAGTNPREFATILSARLKTISGVSAVDIAGPGFLNITVDAAAAGALAKAIVEAGTQYGTNTALAGHTVNMEFVSANPTGPLHIGHTRWAALGDAIARVLRASGADVTAEYYINDAGSQMNTFANSVYSRLHGLPVPEGGYPGQYIADLGHEVLTAHPDIRELTEVAALPVIRAAAYEAQMKDIKATLADFGVAFDVFFSEQELHDAGAIESAVARLREQGHVFDDGGAVWLRTTDFGDDKDRVMIRANGEPTYFAADAAYYLSKKDRGYTEKIYLLGADHHGYIHRLKAIAAAAGDDPEVNIEVLIGQLVSVNGAKLSKRAGNIIELKDLIDWLGKDAVRYSLARFPADSPLTLDPELLKKNSNENPVFYVQYAHARSRGAARNAVAAGVERQVDGADSFDASLLDHATENELLSYLGSYPSIVAKAAELREPHRVARHLEAIAGAYHRWYDACRIAPMGEEAVTDVNRTRLWLNDATSQVLANGLDLLGVSAPERM</sequence>
<dbReference type="EC" id="6.1.1.19" evidence="1"/>
<dbReference type="EMBL" id="CP001341">
    <property type="protein sequence ID" value="ACL40323.1"/>
    <property type="molecule type" value="Genomic_DNA"/>
</dbReference>
<dbReference type="RefSeq" id="WP_015937535.1">
    <property type="nucleotide sequence ID" value="NC_011886.1"/>
</dbReference>
<dbReference type="SMR" id="B8HB09"/>
<dbReference type="STRING" id="452863.Achl_2358"/>
<dbReference type="KEGG" id="ach:Achl_2358"/>
<dbReference type="eggNOG" id="COG0018">
    <property type="taxonomic scope" value="Bacteria"/>
</dbReference>
<dbReference type="HOGENOM" id="CLU_006406_0_1_11"/>
<dbReference type="OrthoDB" id="9803211at2"/>
<dbReference type="Proteomes" id="UP000002505">
    <property type="component" value="Chromosome"/>
</dbReference>
<dbReference type="GO" id="GO:0005737">
    <property type="term" value="C:cytoplasm"/>
    <property type="evidence" value="ECO:0007669"/>
    <property type="project" value="UniProtKB-SubCell"/>
</dbReference>
<dbReference type="GO" id="GO:0004814">
    <property type="term" value="F:arginine-tRNA ligase activity"/>
    <property type="evidence" value="ECO:0007669"/>
    <property type="project" value="UniProtKB-UniRule"/>
</dbReference>
<dbReference type="GO" id="GO:0005524">
    <property type="term" value="F:ATP binding"/>
    <property type="evidence" value="ECO:0007669"/>
    <property type="project" value="UniProtKB-UniRule"/>
</dbReference>
<dbReference type="GO" id="GO:0006420">
    <property type="term" value="P:arginyl-tRNA aminoacylation"/>
    <property type="evidence" value="ECO:0007669"/>
    <property type="project" value="UniProtKB-UniRule"/>
</dbReference>
<dbReference type="CDD" id="cd00671">
    <property type="entry name" value="ArgRS_core"/>
    <property type="match status" value="1"/>
</dbReference>
<dbReference type="FunFam" id="1.10.730.10:FF:000008">
    <property type="entry name" value="Arginine--tRNA ligase"/>
    <property type="match status" value="1"/>
</dbReference>
<dbReference type="Gene3D" id="3.30.1360.70">
    <property type="entry name" value="Arginyl tRNA synthetase N-terminal domain"/>
    <property type="match status" value="1"/>
</dbReference>
<dbReference type="Gene3D" id="3.40.50.620">
    <property type="entry name" value="HUPs"/>
    <property type="match status" value="1"/>
</dbReference>
<dbReference type="Gene3D" id="1.10.730.10">
    <property type="entry name" value="Isoleucyl-tRNA Synthetase, Domain 1"/>
    <property type="match status" value="1"/>
</dbReference>
<dbReference type="HAMAP" id="MF_00123">
    <property type="entry name" value="Arg_tRNA_synth"/>
    <property type="match status" value="1"/>
</dbReference>
<dbReference type="InterPro" id="IPR001412">
    <property type="entry name" value="aa-tRNA-synth_I_CS"/>
</dbReference>
<dbReference type="InterPro" id="IPR001278">
    <property type="entry name" value="Arg-tRNA-ligase"/>
</dbReference>
<dbReference type="InterPro" id="IPR005148">
    <property type="entry name" value="Arg-tRNA-synth_N"/>
</dbReference>
<dbReference type="InterPro" id="IPR036695">
    <property type="entry name" value="Arg-tRNA-synth_N_sf"/>
</dbReference>
<dbReference type="InterPro" id="IPR035684">
    <property type="entry name" value="ArgRS_core"/>
</dbReference>
<dbReference type="InterPro" id="IPR008909">
    <property type="entry name" value="DALR_anticod-bd"/>
</dbReference>
<dbReference type="InterPro" id="IPR014729">
    <property type="entry name" value="Rossmann-like_a/b/a_fold"/>
</dbReference>
<dbReference type="InterPro" id="IPR009080">
    <property type="entry name" value="tRNAsynth_Ia_anticodon-bd"/>
</dbReference>
<dbReference type="NCBIfam" id="TIGR00456">
    <property type="entry name" value="argS"/>
    <property type="match status" value="1"/>
</dbReference>
<dbReference type="PANTHER" id="PTHR11956:SF5">
    <property type="entry name" value="ARGININE--TRNA LIGASE, CYTOPLASMIC"/>
    <property type="match status" value="1"/>
</dbReference>
<dbReference type="PANTHER" id="PTHR11956">
    <property type="entry name" value="ARGINYL-TRNA SYNTHETASE"/>
    <property type="match status" value="1"/>
</dbReference>
<dbReference type="Pfam" id="PF03485">
    <property type="entry name" value="Arg_tRNA_synt_N"/>
    <property type="match status" value="1"/>
</dbReference>
<dbReference type="Pfam" id="PF05746">
    <property type="entry name" value="DALR_1"/>
    <property type="match status" value="1"/>
</dbReference>
<dbReference type="Pfam" id="PF00750">
    <property type="entry name" value="tRNA-synt_1d"/>
    <property type="match status" value="2"/>
</dbReference>
<dbReference type="PRINTS" id="PR01038">
    <property type="entry name" value="TRNASYNTHARG"/>
</dbReference>
<dbReference type="SMART" id="SM01016">
    <property type="entry name" value="Arg_tRNA_synt_N"/>
    <property type="match status" value="1"/>
</dbReference>
<dbReference type="SMART" id="SM00836">
    <property type="entry name" value="DALR_1"/>
    <property type="match status" value="1"/>
</dbReference>
<dbReference type="SUPFAM" id="SSF47323">
    <property type="entry name" value="Anticodon-binding domain of a subclass of class I aminoacyl-tRNA synthetases"/>
    <property type="match status" value="1"/>
</dbReference>
<dbReference type="SUPFAM" id="SSF55190">
    <property type="entry name" value="Arginyl-tRNA synthetase (ArgRS), N-terminal 'additional' domain"/>
    <property type="match status" value="1"/>
</dbReference>
<dbReference type="SUPFAM" id="SSF52374">
    <property type="entry name" value="Nucleotidylyl transferase"/>
    <property type="match status" value="1"/>
</dbReference>
<dbReference type="PROSITE" id="PS00178">
    <property type="entry name" value="AA_TRNA_LIGASE_I"/>
    <property type="match status" value="1"/>
</dbReference>
<accession>B8HB09</accession>
<name>SYR_PSECP</name>
<organism>
    <name type="scientific">Pseudarthrobacter chlorophenolicus (strain ATCC 700700 / DSM 12829 / CIP 107037 / JCM 12360 / KCTC 9906 / NCIMB 13794 / A6)</name>
    <name type="common">Arthrobacter chlorophenolicus</name>
    <dbReference type="NCBI Taxonomy" id="452863"/>
    <lineage>
        <taxon>Bacteria</taxon>
        <taxon>Bacillati</taxon>
        <taxon>Actinomycetota</taxon>
        <taxon>Actinomycetes</taxon>
        <taxon>Micrococcales</taxon>
        <taxon>Micrococcaceae</taxon>
        <taxon>Pseudarthrobacter</taxon>
    </lineage>
</organism>
<reference key="1">
    <citation type="submission" date="2009-01" db="EMBL/GenBank/DDBJ databases">
        <title>Complete sequence of chromosome of Arthrobacter chlorophenolicus A6.</title>
        <authorList>
            <consortium name="US DOE Joint Genome Institute"/>
            <person name="Lucas S."/>
            <person name="Copeland A."/>
            <person name="Lapidus A."/>
            <person name="Glavina del Rio T."/>
            <person name="Tice H."/>
            <person name="Bruce D."/>
            <person name="Goodwin L."/>
            <person name="Pitluck S."/>
            <person name="Goltsman E."/>
            <person name="Clum A."/>
            <person name="Larimer F."/>
            <person name="Land M."/>
            <person name="Hauser L."/>
            <person name="Kyrpides N."/>
            <person name="Mikhailova N."/>
            <person name="Jansson J."/>
            <person name="Richardson P."/>
        </authorList>
    </citation>
    <scope>NUCLEOTIDE SEQUENCE [LARGE SCALE GENOMIC DNA]</scope>
    <source>
        <strain>ATCC 700700 / DSM 12829 / CIP 107037 / JCM 12360 / KCTC 9906 / NCIMB 13794 / A6</strain>
    </source>
</reference>
<gene>
    <name evidence="1" type="primary">argS</name>
    <name type="ordered locus">Achl_2358</name>
</gene>
<protein>
    <recommendedName>
        <fullName evidence="1">Arginine--tRNA ligase</fullName>
        <ecNumber evidence="1">6.1.1.19</ecNumber>
    </recommendedName>
    <alternativeName>
        <fullName evidence="1">Arginyl-tRNA synthetase</fullName>
        <shortName evidence="1">ArgRS</shortName>
    </alternativeName>
</protein>
<keyword id="KW-0030">Aminoacyl-tRNA synthetase</keyword>
<keyword id="KW-0067">ATP-binding</keyword>
<keyword id="KW-0963">Cytoplasm</keyword>
<keyword id="KW-0436">Ligase</keyword>
<keyword id="KW-0547">Nucleotide-binding</keyword>
<keyword id="KW-0648">Protein biosynthesis</keyword>
<evidence type="ECO:0000255" key="1">
    <source>
        <dbReference type="HAMAP-Rule" id="MF_00123"/>
    </source>
</evidence>
<feature type="chain" id="PRO_1000198872" description="Arginine--tRNA ligase">
    <location>
        <begin position="1"/>
        <end position="554"/>
    </location>
</feature>
<feature type="short sequence motif" description="'HIGH' region">
    <location>
        <begin position="132"/>
        <end position="142"/>
    </location>
</feature>
<proteinExistence type="inferred from homology"/>